<protein>
    <recommendedName>
        <fullName evidence="1">Ribonuclease Z</fullName>
        <shortName evidence="1">RNase Z</shortName>
        <ecNumber evidence="1">3.1.26.11</ecNumber>
    </recommendedName>
    <alternativeName>
        <fullName evidence="1">tRNA 3 endonuclease</fullName>
    </alternativeName>
    <alternativeName>
        <fullName evidence="1">tRNase Z</fullName>
    </alternativeName>
</protein>
<name>RNZ_ALKOO</name>
<evidence type="ECO:0000255" key="1">
    <source>
        <dbReference type="HAMAP-Rule" id="MF_01818"/>
    </source>
</evidence>
<gene>
    <name evidence="1" type="primary">rnz</name>
    <name type="ordered locus">Clos_1683</name>
</gene>
<dbReference type="EC" id="3.1.26.11" evidence="1"/>
<dbReference type="EMBL" id="CP000853">
    <property type="protein sequence ID" value="ABW19223.1"/>
    <property type="molecule type" value="Genomic_DNA"/>
</dbReference>
<dbReference type="RefSeq" id="WP_012159535.1">
    <property type="nucleotide sequence ID" value="NC_009922.1"/>
</dbReference>
<dbReference type="SMR" id="A8MGK0"/>
<dbReference type="STRING" id="350688.Clos_1683"/>
<dbReference type="KEGG" id="aoe:Clos_1683"/>
<dbReference type="eggNOG" id="COG1234">
    <property type="taxonomic scope" value="Bacteria"/>
</dbReference>
<dbReference type="HOGENOM" id="CLU_031317_2_1_9"/>
<dbReference type="OrthoDB" id="9800940at2"/>
<dbReference type="Proteomes" id="UP000000269">
    <property type="component" value="Chromosome"/>
</dbReference>
<dbReference type="GO" id="GO:0042781">
    <property type="term" value="F:3'-tRNA processing endoribonuclease activity"/>
    <property type="evidence" value="ECO:0007669"/>
    <property type="project" value="UniProtKB-UniRule"/>
</dbReference>
<dbReference type="GO" id="GO:0008270">
    <property type="term" value="F:zinc ion binding"/>
    <property type="evidence" value="ECO:0007669"/>
    <property type="project" value="UniProtKB-UniRule"/>
</dbReference>
<dbReference type="CDD" id="cd07717">
    <property type="entry name" value="RNaseZ_ZiPD-like_MBL-fold"/>
    <property type="match status" value="1"/>
</dbReference>
<dbReference type="Gene3D" id="3.60.15.10">
    <property type="entry name" value="Ribonuclease Z/Hydroxyacylglutathione hydrolase-like"/>
    <property type="match status" value="1"/>
</dbReference>
<dbReference type="HAMAP" id="MF_01818">
    <property type="entry name" value="RNase_Z_BN"/>
    <property type="match status" value="1"/>
</dbReference>
<dbReference type="InterPro" id="IPR001279">
    <property type="entry name" value="Metallo-B-lactamas"/>
</dbReference>
<dbReference type="InterPro" id="IPR036866">
    <property type="entry name" value="RibonucZ/Hydroxyglut_hydro"/>
</dbReference>
<dbReference type="InterPro" id="IPR013471">
    <property type="entry name" value="RNase_Z/BN"/>
</dbReference>
<dbReference type="NCBIfam" id="NF000801">
    <property type="entry name" value="PRK00055.1-3"/>
    <property type="match status" value="1"/>
</dbReference>
<dbReference type="NCBIfam" id="TIGR02651">
    <property type="entry name" value="RNase_Z"/>
    <property type="match status" value="1"/>
</dbReference>
<dbReference type="PANTHER" id="PTHR46018">
    <property type="entry name" value="ZINC PHOSPHODIESTERASE ELAC PROTEIN 1"/>
    <property type="match status" value="1"/>
</dbReference>
<dbReference type="PANTHER" id="PTHR46018:SF2">
    <property type="entry name" value="ZINC PHOSPHODIESTERASE ELAC PROTEIN 1"/>
    <property type="match status" value="1"/>
</dbReference>
<dbReference type="Pfam" id="PF00753">
    <property type="entry name" value="Lactamase_B"/>
    <property type="match status" value="1"/>
</dbReference>
<dbReference type="Pfam" id="PF12706">
    <property type="entry name" value="Lactamase_B_2"/>
    <property type="match status" value="1"/>
</dbReference>
<dbReference type="SUPFAM" id="SSF56281">
    <property type="entry name" value="Metallo-hydrolase/oxidoreductase"/>
    <property type="match status" value="1"/>
</dbReference>
<reference key="1">
    <citation type="submission" date="2007-10" db="EMBL/GenBank/DDBJ databases">
        <title>Complete genome of Alkaliphilus oremlandii OhILAs.</title>
        <authorList>
            <person name="Copeland A."/>
            <person name="Lucas S."/>
            <person name="Lapidus A."/>
            <person name="Barry K."/>
            <person name="Detter J.C."/>
            <person name="Glavina del Rio T."/>
            <person name="Hammon N."/>
            <person name="Israni S."/>
            <person name="Dalin E."/>
            <person name="Tice H."/>
            <person name="Pitluck S."/>
            <person name="Chain P."/>
            <person name="Malfatti S."/>
            <person name="Shin M."/>
            <person name="Vergez L."/>
            <person name="Schmutz J."/>
            <person name="Larimer F."/>
            <person name="Land M."/>
            <person name="Hauser L."/>
            <person name="Kyrpides N."/>
            <person name="Mikhailova N."/>
            <person name="Stolz J.F."/>
            <person name="Dawson A."/>
            <person name="Fisher E."/>
            <person name="Crable B."/>
            <person name="Perera E."/>
            <person name="Lisak J."/>
            <person name="Ranganathan M."/>
            <person name="Basu P."/>
            <person name="Richardson P."/>
        </authorList>
    </citation>
    <scope>NUCLEOTIDE SEQUENCE [LARGE SCALE GENOMIC DNA]</scope>
    <source>
        <strain>OhILAs</strain>
    </source>
</reference>
<organism>
    <name type="scientific">Alkaliphilus oremlandii (strain OhILAs)</name>
    <name type="common">Clostridium oremlandii (strain OhILAs)</name>
    <dbReference type="NCBI Taxonomy" id="350688"/>
    <lineage>
        <taxon>Bacteria</taxon>
        <taxon>Bacillati</taxon>
        <taxon>Bacillota</taxon>
        <taxon>Clostridia</taxon>
        <taxon>Peptostreptococcales</taxon>
        <taxon>Natronincolaceae</taxon>
        <taxon>Alkaliphilus</taxon>
    </lineage>
</organism>
<accession>A8MGK0</accession>
<proteinExistence type="inferred from homology"/>
<comment type="function">
    <text evidence="1">Zinc phosphodiesterase, which displays some tRNA 3'-processing endonuclease activity. Probably involved in tRNA maturation, by removing a 3'-trailer from precursor tRNA.</text>
</comment>
<comment type="catalytic activity">
    <reaction evidence="1">
        <text>Endonucleolytic cleavage of RNA, removing extra 3' nucleotides from tRNA precursor, generating 3' termini of tRNAs. A 3'-hydroxy group is left at the tRNA terminus and a 5'-phosphoryl group is left at the trailer molecule.</text>
        <dbReference type="EC" id="3.1.26.11"/>
    </reaction>
</comment>
<comment type="cofactor">
    <cofactor evidence="1">
        <name>Zn(2+)</name>
        <dbReference type="ChEBI" id="CHEBI:29105"/>
    </cofactor>
    <text evidence="1">Binds 2 Zn(2+) ions.</text>
</comment>
<comment type="subunit">
    <text evidence="1">Homodimer.</text>
</comment>
<comment type="similarity">
    <text evidence="1">Belongs to the RNase Z family.</text>
</comment>
<feature type="chain" id="PRO_1000070261" description="Ribonuclease Z">
    <location>
        <begin position="1"/>
        <end position="317"/>
    </location>
</feature>
<feature type="active site" description="Proton acceptor" evidence="1">
    <location>
        <position position="65"/>
    </location>
</feature>
<feature type="binding site" evidence="1">
    <location>
        <position position="61"/>
    </location>
    <ligand>
        <name>Zn(2+)</name>
        <dbReference type="ChEBI" id="CHEBI:29105"/>
        <label>1</label>
        <note>catalytic</note>
    </ligand>
</feature>
<feature type="binding site" evidence="1">
    <location>
        <position position="63"/>
    </location>
    <ligand>
        <name>Zn(2+)</name>
        <dbReference type="ChEBI" id="CHEBI:29105"/>
        <label>1</label>
        <note>catalytic</note>
    </ligand>
</feature>
<feature type="binding site" evidence="1">
    <location>
        <position position="65"/>
    </location>
    <ligand>
        <name>Zn(2+)</name>
        <dbReference type="ChEBI" id="CHEBI:29105"/>
        <label>2</label>
        <note>catalytic</note>
    </ligand>
</feature>
<feature type="binding site" evidence="1">
    <location>
        <position position="66"/>
    </location>
    <ligand>
        <name>Zn(2+)</name>
        <dbReference type="ChEBI" id="CHEBI:29105"/>
        <label>2</label>
        <note>catalytic</note>
    </ligand>
</feature>
<feature type="binding site" evidence="1">
    <location>
        <position position="153"/>
    </location>
    <ligand>
        <name>Zn(2+)</name>
        <dbReference type="ChEBI" id="CHEBI:29105"/>
        <label>1</label>
        <note>catalytic</note>
    </ligand>
</feature>
<feature type="binding site" evidence="1">
    <location>
        <position position="221"/>
    </location>
    <ligand>
        <name>Zn(2+)</name>
        <dbReference type="ChEBI" id="CHEBI:29105"/>
        <label>1</label>
        <note>catalytic</note>
    </ligand>
</feature>
<feature type="binding site" evidence="1">
    <location>
        <position position="221"/>
    </location>
    <ligand>
        <name>Zn(2+)</name>
        <dbReference type="ChEBI" id="CHEBI:29105"/>
        <label>2</label>
        <note>catalytic</note>
    </ligand>
</feature>
<feature type="binding site" evidence="1">
    <location>
        <position position="280"/>
    </location>
    <ligand>
        <name>Zn(2+)</name>
        <dbReference type="ChEBI" id="CHEBI:29105"/>
        <label>2</label>
        <note>catalytic</note>
    </ligand>
</feature>
<keyword id="KW-0255">Endonuclease</keyword>
<keyword id="KW-0378">Hydrolase</keyword>
<keyword id="KW-0479">Metal-binding</keyword>
<keyword id="KW-0540">Nuclease</keyword>
<keyword id="KW-1185">Reference proteome</keyword>
<keyword id="KW-0819">tRNA processing</keyword>
<keyword id="KW-0862">Zinc</keyword>
<sequence>MLNVTLLGSGGGMPMPERHLSSLMINYKGRKILVDCGEGTQVAIRKMNAGFKSIDIICITHVHGDHIFGIPGLLSTMGNSQRLDPVTIVGPKGISDVMRGLLLSIKQLPYSIEIIEDPKGKLGITNTEQGLKIKEQKDGMNDEITVSTLELDHSAPCFGYSFYLNRRPKFEPEKAIKNDVPRLIWSKLQKGETIVAGDRKYSPDLVLGEQRRGIKLTYITDTRPTKDIPQWINQSDLFICEGTYGDNDDMDKAIKNKHMTFMEAGELAKKGKVKELLLTHFSPALKEPNFYEHNAKKEFAHTTIGYDGYRKNIEYKN</sequence>